<evidence type="ECO:0000255" key="1">
    <source>
        <dbReference type="HAMAP-Rule" id="MF_00380"/>
    </source>
</evidence>
<evidence type="ECO:0000256" key="2">
    <source>
        <dbReference type="SAM" id="MobiDB-lite"/>
    </source>
</evidence>
<accession>A9M383</accession>
<dbReference type="EMBL" id="CP000381">
    <property type="protein sequence ID" value="ABX72883.1"/>
    <property type="molecule type" value="Genomic_DNA"/>
</dbReference>
<dbReference type="RefSeq" id="WP_002214080.1">
    <property type="nucleotide sequence ID" value="NC_010120.1"/>
</dbReference>
<dbReference type="SMR" id="A9M383"/>
<dbReference type="KEGG" id="nmn:NMCC_0688"/>
<dbReference type="HOGENOM" id="CLU_105066_1_3_4"/>
<dbReference type="Proteomes" id="UP000001177">
    <property type="component" value="Chromosome"/>
</dbReference>
<dbReference type="GO" id="GO:0005829">
    <property type="term" value="C:cytosol"/>
    <property type="evidence" value="ECO:0007669"/>
    <property type="project" value="TreeGrafter"/>
</dbReference>
<dbReference type="GO" id="GO:0003677">
    <property type="term" value="F:DNA binding"/>
    <property type="evidence" value="ECO:0007669"/>
    <property type="project" value="UniProtKB-UniRule"/>
</dbReference>
<dbReference type="GO" id="GO:0030527">
    <property type="term" value="F:structural constituent of chromatin"/>
    <property type="evidence" value="ECO:0007669"/>
    <property type="project" value="InterPro"/>
</dbReference>
<dbReference type="GO" id="GO:0006310">
    <property type="term" value="P:DNA recombination"/>
    <property type="evidence" value="ECO:0007669"/>
    <property type="project" value="UniProtKB-UniRule"/>
</dbReference>
<dbReference type="GO" id="GO:0009893">
    <property type="term" value="P:positive regulation of metabolic process"/>
    <property type="evidence" value="ECO:0007669"/>
    <property type="project" value="UniProtKB-ARBA"/>
</dbReference>
<dbReference type="GO" id="GO:0006355">
    <property type="term" value="P:regulation of DNA-templated transcription"/>
    <property type="evidence" value="ECO:0007669"/>
    <property type="project" value="UniProtKB-UniRule"/>
</dbReference>
<dbReference type="GO" id="GO:0006417">
    <property type="term" value="P:regulation of translation"/>
    <property type="evidence" value="ECO:0007669"/>
    <property type="project" value="UniProtKB-UniRule"/>
</dbReference>
<dbReference type="CDD" id="cd13835">
    <property type="entry name" value="IHF_A"/>
    <property type="match status" value="1"/>
</dbReference>
<dbReference type="FunFam" id="4.10.520.10:FF:000002">
    <property type="entry name" value="Integration host factor subunit alpha"/>
    <property type="match status" value="1"/>
</dbReference>
<dbReference type="Gene3D" id="4.10.520.10">
    <property type="entry name" value="IHF-like DNA-binding proteins"/>
    <property type="match status" value="1"/>
</dbReference>
<dbReference type="HAMAP" id="MF_00380">
    <property type="entry name" value="IHF_alpha"/>
    <property type="match status" value="1"/>
</dbReference>
<dbReference type="InterPro" id="IPR000119">
    <property type="entry name" value="Hist_DNA-bd"/>
</dbReference>
<dbReference type="InterPro" id="IPR020816">
    <property type="entry name" value="Histone-like_DNA-bd_CS"/>
</dbReference>
<dbReference type="InterPro" id="IPR010992">
    <property type="entry name" value="IHF-like_DNA-bd_dom_sf"/>
</dbReference>
<dbReference type="InterPro" id="IPR005684">
    <property type="entry name" value="IHF_alpha"/>
</dbReference>
<dbReference type="NCBIfam" id="TIGR00987">
    <property type="entry name" value="himA"/>
    <property type="match status" value="1"/>
</dbReference>
<dbReference type="NCBIfam" id="NF001401">
    <property type="entry name" value="PRK00285.1"/>
    <property type="match status" value="1"/>
</dbReference>
<dbReference type="PANTHER" id="PTHR33175">
    <property type="entry name" value="DNA-BINDING PROTEIN HU"/>
    <property type="match status" value="1"/>
</dbReference>
<dbReference type="PANTHER" id="PTHR33175:SF2">
    <property type="entry name" value="INTEGRATION HOST FACTOR SUBUNIT ALPHA"/>
    <property type="match status" value="1"/>
</dbReference>
<dbReference type="Pfam" id="PF00216">
    <property type="entry name" value="Bac_DNA_binding"/>
    <property type="match status" value="1"/>
</dbReference>
<dbReference type="PRINTS" id="PR01727">
    <property type="entry name" value="DNABINDINGHU"/>
</dbReference>
<dbReference type="SMART" id="SM00411">
    <property type="entry name" value="BHL"/>
    <property type="match status" value="1"/>
</dbReference>
<dbReference type="SUPFAM" id="SSF47729">
    <property type="entry name" value="IHF-like DNA-binding proteins"/>
    <property type="match status" value="1"/>
</dbReference>
<dbReference type="PROSITE" id="PS00045">
    <property type="entry name" value="HISTONE_LIKE"/>
    <property type="match status" value="1"/>
</dbReference>
<feature type="chain" id="PRO_1000080033" description="Integration host factor subunit alpha">
    <location>
        <begin position="1"/>
        <end position="100"/>
    </location>
</feature>
<feature type="region of interest" description="Disordered" evidence="2">
    <location>
        <begin position="53"/>
        <end position="72"/>
    </location>
</feature>
<comment type="function">
    <text evidence="1">This protein is one of the two subunits of integration host factor, a specific DNA-binding protein that functions in genetic recombination as well as in transcriptional and translational control.</text>
</comment>
<comment type="subunit">
    <text evidence="1">Heterodimer of an alpha and a beta chain.</text>
</comment>
<comment type="similarity">
    <text evidence="1">Belongs to the bacterial histone-like protein family.</text>
</comment>
<protein>
    <recommendedName>
        <fullName evidence="1">Integration host factor subunit alpha</fullName>
        <shortName evidence="1">IHF-alpha</shortName>
    </recommendedName>
</protein>
<sequence length="100" mass="11422">MTLTKAELADILVDKVSNVTKNDAKEIVELFFEEIRSTLASGEEIKISGFGNFQLRDKPQRPGRNPKTGEEVPITARRVVTFHASQKLKSMVEHYYDKQR</sequence>
<name>IHFA_NEIM0</name>
<proteinExistence type="inferred from homology"/>
<organism>
    <name type="scientific">Neisseria meningitidis serogroup C (strain 053442)</name>
    <dbReference type="NCBI Taxonomy" id="374833"/>
    <lineage>
        <taxon>Bacteria</taxon>
        <taxon>Pseudomonadati</taxon>
        <taxon>Pseudomonadota</taxon>
        <taxon>Betaproteobacteria</taxon>
        <taxon>Neisseriales</taxon>
        <taxon>Neisseriaceae</taxon>
        <taxon>Neisseria</taxon>
    </lineage>
</organism>
<keyword id="KW-0233">DNA recombination</keyword>
<keyword id="KW-0238">DNA-binding</keyword>
<keyword id="KW-0804">Transcription</keyword>
<keyword id="KW-0805">Transcription regulation</keyword>
<keyword id="KW-0810">Translation regulation</keyword>
<gene>
    <name evidence="1" type="primary">ihfA</name>
    <name evidence="1" type="synonym">himA</name>
    <name type="ordered locus">NMCC_0688</name>
</gene>
<reference key="1">
    <citation type="journal article" date="2008" name="Genomics">
        <title>Characterization of ST-4821 complex, a unique Neisseria meningitidis clone.</title>
        <authorList>
            <person name="Peng J."/>
            <person name="Yang L."/>
            <person name="Yang F."/>
            <person name="Yang J."/>
            <person name="Yan Y."/>
            <person name="Nie H."/>
            <person name="Zhang X."/>
            <person name="Xiong Z."/>
            <person name="Jiang Y."/>
            <person name="Cheng F."/>
            <person name="Xu X."/>
            <person name="Chen S."/>
            <person name="Sun L."/>
            <person name="Li W."/>
            <person name="Shen Y."/>
            <person name="Shao Z."/>
            <person name="Liang X."/>
            <person name="Xu J."/>
            <person name="Jin Q."/>
        </authorList>
    </citation>
    <scope>NUCLEOTIDE SEQUENCE [LARGE SCALE GENOMIC DNA]</scope>
    <source>
        <strain>053442</strain>
    </source>
</reference>